<sequence length="196" mass="20939">MLERIKGCFTESIQTQIAAAEALPDAISCAAMALVQSLLNGNKILCCGNGTSAANAQHFAASMINRFETERPSLPAIALNADNVVLTAITNDRLHDEVYAKQVRALGQAGDVLLAISTRGNSRDIVKAVEAAVTRDMTIVALTGYDGGELAGLLGQLDVEIRIPSHRGARVQELHMLTVNCLCDLIDNTLFPHQDD</sequence>
<name>DIAA_YERPY</name>
<proteinExistence type="inferred from homology"/>
<organism>
    <name type="scientific">Yersinia pseudotuberculosis serotype O:3 (strain YPIII)</name>
    <dbReference type="NCBI Taxonomy" id="502800"/>
    <lineage>
        <taxon>Bacteria</taxon>
        <taxon>Pseudomonadati</taxon>
        <taxon>Pseudomonadota</taxon>
        <taxon>Gammaproteobacteria</taxon>
        <taxon>Enterobacterales</taxon>
        <taxon>Yersiniaceae</taxon>
        <taxon>Yersinia</taxon>
    </lineage>
</organism>
<evidence type="ECO:0000255" key="1">
    <source>
        <dbReference type="HAMAP-Rule" id="MF_01157"/>
    </source>
</evidence>
<gene>
    <name evidence="1" type="primary">diaA</name>
    <name type="ordered locus">YPK_0537</name>
</gene>
<feature type="chain" id="PRO_1000137806" description="DnaA initiator-associating protein DiaA">
    <location>
        <begin position="1"/>
        <end position="196"/>
    </location>
</feature>
<feature type="domain" description="SIS" evidence="1">
    <location>
        <begin position="34"/>
        <end position="196"/>
    </location>
</feature>
<reference key="1">
    <citation type="submission" date="2008-02" db="EMBL/GenBank/DDBJ databases">
        <title>Complete sequence of Yersinia pseudotuberculosis YPIII.</title>
        <authorList>
            <consortium name="US DOE Joint Genome Institute"/>
            <person name="Copeland A."/>
            <person name="Lucas S."/>
            <person name="Lapidus A."/>
            <person name="Glavina del Rio T."/>
            <person name="Dalin E."/>
            <person name="Tice H."/>
            <person name="Bruce D."/>
            <person name="Goodwin L."/>
            <person name="Pitluck S."/>
            <person name="Munk A.C."/>
            <person name="Brettin T."/>
            <person name="Detter J.C."/>
            <person name="Han C."/>
            <person name="Tapia R."/>
            <person name="Schmutz J."/>
            <person name="Larimer F."/>
            <person name="Land M."/>
            <person name="Hauser L."/>
            <person name="Challacombe J.F."/>
            <person name="Green L."/>
            <person name="Lindler L.E."/>
            <person name="Nikolich M.P."/>
            <person name="Richardson P."/>
        </authorList>
    </citation>
    <scope>NUCLEOTIDE SEQUENCE [LARGE SCALE GENOMIC DNA]</scope>
    <source>
        <strain>YPIII</strain>
    </source>
</reference>
<dbReference type="EMBL" id="CP000950">
    <property type="protein sequence ID" value="ACA66840.1"/>
    <property type="molecule type" value="Genomic_DNA"/>
</dbReference>
<dbReference type="RefSeq" id="WP_011193139.1">
    <property type="nucleotide sequence ID" value="NZ_CP009792.1"/>
</dbReference>
<dbReference type="SMR" id="B1JL79"/>
<dbReference type="GeneID" id="96662986"/>
<dbReference type="KEGG" id="ypy:YPK_0537"/>
<dbReference type="PATRIC" id="fig|502800.11.peg.1149"/>
<dbReference type="GO" id="GO:0097367">
    <property type="term" value="F:carbohydrate derivative binding"/>
    <property type="evidence" value="ECO:0007669"/>
    <property type="project" value="InterPro"/>
</dbReference>
<dbReference type="GO" id="GO:1901135">
    <property type="term" value="P:carbohydrate derivative metabolic process"/>
    <property type="evidence" value="ECO:0007669"/>
    <property type="project" value="InterPro"/>
</dbReference>
<dbReference type="GO" id="GO:0006260">
    <property type="term" value="P:DNA replication"/>
    <property type="evidence" value="ECO:0007669"/>
    <property type="project" value="UniProtKB-UniRule"/>
</dbReference>
<dbReference type="CDD" id="cd05006">
    <property type="entry name" value="SIS_GmhA"/>
    <property type="match status" value="1"/>
</dbReference>
<dbReference type="FunFam" id="3.40.50.10490:FF:000006">
    <property type="entry name" value="DnaA initiator-associating protein DiaA"/>
    <property type="match status" value="1"/>
</dbReference>
<dbReference type="Gene3D" id="3.40.50.10490">
    <property type="entry name" value="Glucose-6-phosphate isomerase like protein, domain 1"/>
    <property type="match status" value="1"/>
</dbReference>
<dbReference type="HAMAP" id="MF_01157">
    <property type="entry name" value="SIS_DiaA"/>
    <property type="match status" value="1"/>
</dbReference>
<dbReference type="InterPro" id="IPR023070">
    <property type="entry name" value="DiaA"/>
</dbReference>
<dbReference type="InterPro" id="IPR035461">
    <property type="entry name" value="GmhA/DiaA"/>
</dbReference>
<dbReference type="InterPro" id="IPR001347">
    <property type="entry name" value="SIS_dom"/>
</dbReference>
<dbReference type="InterPro" id="IPR046348">
    <property type="entry name" value="SIS_dom_sf"/>
</dbReference>
<dbReference type="InterPro" id="IPR050099">
    <property type="entry name" value="SIS_GmhA/DiaA_subfam"/>
</dbReference>
<dbReference type="NCBIfam" id="NF008138">
    <property type="entry name" value="PRK10886.1"/>
    <property type="match status" value="1"/>
</dbReference>
<dbReference type="PANTHER" id="PTHR30390:SF6">
    <property type="entry name" value="DNAA INITIATOR-ASSOCIATING PROTEIN DIAA"/>
    <property type="match status" value="1"/>
</dbReference>
<dbReference type="PANTHER" id="PTHR30390">
    <property type="entry name" value="SEDOHEPTULOSE 7-PHOSPHATE ISOMERASE / DNAA INITIATOR-ASSOCIATING FACTOR FOR REPLICATION INITIATION"/>
    <property type="match status" value="1"/>
</dbReference>
<dbReference type="Pfam" id="PF13580">
    <property type="entry name" value="SIS_2"/>
    <property type="match status" value="1"/>
</dbReference>
<dbReference type="SUPFAM" id="SSF53697">
    <property type="entry name" value="SIS domain"/>
    <property type="match status" value="1"/>
</dbReference>
<dbReference type="PROSITE" id="PS51464">
    <property type="entry name" value="SIS"/>
    <property type="match status" value="1"/>
</dbReference>
<comment type="function">
    <text evidence="1">Required for the timely initiation of chromosomal replication via direct interactions with the DnaA initiator protein.</text>
</comment>
<comment type="subunit">
    <text evidence="1">Homotetramer; dimer of dimers.</text>
</comment>
<comment type="similarity">
    <text evidence="1">Belongs to the SIS family. DiaA subfamily.</text>
</comment>
<accession>B1JL79</accession>
<protein>
    <recommendedName>
        <fullName evidence="1">DnaA initiator-associating protein DiaA</fullName>
    </recommendedName>
</protein>
<keyword id="KW-0235">DNA replication</keyword>